<accession>A7ZI02</accession>
<gene>
    <name evidence="1" type="primary">proA</name>
    <name type="ordered locus">EcE24377A_0275</name>
</gene>
<feature type="chain" id="PRO_1000060839" description="Gamma-glutamyl phosphate reductase">
    <location>
        <begin position="1"/>
        <end position="417"/>
    </location>
</feature>
<sequence>MLEQMGIAAKQASYKLAQLSSREKNRVLEKIADELEAQSEIILNANAQDVADARANGLGEAMLDRLALTPARLKGIADDVRQVCNLADPVGQVIDGSVLDSGLRLERRRVPLGVIGVIYEARPNVTVDVASLCLKTGNAVILRGGKETCRTNAATVAVIQDALKSCGLPAGAVQAIDNPDRALVSEMLRMDKYIDMLIPRGGAGLHKLCREQSTIPVITGGIGVCHIYVDESVEIAEALKVIVNAKTQRPSTCNTVETLLVNKNIADSFLPALSKQMAESGVTLHADAAALAQLQAGPAKVVAVKAEEYDDEFLSLDLNVKIVSDLDDAIAHIREHGTQHSDAILTRDMRNAQRFVNEVDSSAVYVNASTRFTDGGQFGLGAEVAVSTQKLHARGPMGLEALTTYKWIGIGDYTIRA</sequence>
<evidence type="ECO:0000255" key="1">
    <source>
        <dbReference type="HAMAP-Rule" id="MF_00412"/>
    </source>
</evidence>
<keyword id="KW-0028">Amino-acid biosynthesis</keyword>
<keyword id="KW-0963">Cytoplasm</keyword>
<keyword id="KW-0521">NADP</keyword>
<keyword id="KW-0560">Oxidoreductase</keyword>
<keyword id="KW-0641">Proline biosynthesis</keyword>
<keyword id="KW-1185">Reference proteome</keyword>
<name>PROA_ECO24</name>
<proteinExistence type="inferred from homology"/>
<reference key="1">
    <citation type="journal article" date="2008" name="J. Bacteriol.">
        <title>The pangenome structure of Escherichia coli: comparative genomic analysis of E. coli commensal and pathogenic isolates.</title>
        <authorList>
            <person name="Rasko D.A."/>
            <person name="Rosovitz M.J."/>
            <person name="Myers G.S.A."/>
            <person name="Mongodin E.F."/>
            <person name="Fricke W.F."/>
            <person name="Gajer P."/>
            <person name="Crabtree J."/>
            <person name="Sebaihia M."/>
            <person name="Thomson N.R."/>
            <person name="Chaudhuri R."/>
            <person name="Henderson I.R."/>
            <person name="Sperandio V."/>
            <person name="Ravel J."/>
        </authorList>
    </citation>
    <scope>NUCLEOTIDE SEQUENCE [LARGE SCALE GENOMIC DNA]</scope>
    <source>
        <strain>E24377A / ETEC</strain>
    </source>
</reference>
<organism>
    <name type="scientific">Escherichia coli O139:H28 (strain E24377A / ETEC)</name>
    <dbReference type="NCBI Taxonomy" id="331111"/>
    <lineage>
        <taxon>Bacteria</taxon>
        <taxon>Pseudomonadati</taxon>
        <taxon>Pseudomonadota</taxon>
        <taxon>Gammaproteobacteria</taxon>
        <taxon>Enterobacterales</taxon>
        <taxon>Enterobacteriaceae</taxon>
        <taxon>Escherichia</taxon>
    </lineage>
</organism>
<dbReference type="EC" id="1.2.1.41" evidence="1"/>
<dbReference type="EMBL" id="CP000800">
    <property type="protein sequence ID" value="ABV19367.1"/>
    <property type="molecule type" value="Genomic_DNA"/>
</dbReference>
<dbReference type="RefSeq" id="WP_000893255.1">
    <property type="nucleotide sequence ID" value="NC_009801.1"/>
</dbReference>
<dbReference type="SMR" id="A7ZI02"/>
<dbReference type="GeneID" id="75205724"/>
<dbReference type="KEGG" id="ecw:EcE24377A_0275"/>
<dbReference type="HOGENOM" id="CLU_030231_0_0_6"/>
<dbReference type="UniPathway" id="UPA00098">
    <property type="reaction ID" value="UER00360"/>
</dbReference>
<dbReference type="Proteomes" id="UP000001122">
    <property type="component" value="Chromosome"/>
</dbReference>
<dbReference type="GO" id="GO:0005737">
    <property type="term" value="C:cytoplasm"/>
    <property type="evidence" value="ECO:0007669"/>
    <property type="project" value="UniProtKB-SubCell"/>
</dbReference>
<dbReference type="GO" id="GO:0004350">
    <property type="term" value="F:glutamate-5-semialdehyde dehydrogenase activity"/>
    <property type="evidence" value="ECO:0007669"/>
    <property type="project" value="UniProtKB-UniRule"/>
</dbReference>
<dbReference type="GO" id="GO:0050661">
    <property type="term" value="F:NADP binding"/>
    <property type="evidence" value="ECO:0007669"/>
    <property type="project" value="InterPro"/>
</dbReference>
<dbReference type="GO" id="GO:0055129">
    <property type="term" value="P:L-proline biosynthetic process"/>
    <property type="evidence" value="ECO:0007669"/>
    <property type="project" value="UniProtKB-UniRule"/>
</dbReference>
<dbReference type="CDD" id="cd07079">
    <property type="entry name" value="ALDH_F18-19_ProA-GPR"/>
    <property type="match status" value="1"/>
</dbReference>
<dbReference type="FunFam" id="3.40.309.10:FF:000006">
    <property type="entry name" value="Gamma-glutamyl phosphate reductase"/>
    <property type="match status" value="1"/>
</dbReference>
<dbReference type="Gene3D" id="3.40.605.10">
    <property type="entry name" value="Aldehyde Dehydrogenase, Chain A, domain 1"/>
    <property type="match status" value="1"/>
</dbReference>
<dbReference type="Gene3D" id="3.40.309.10">
    <property type="entry name" value="Aldehyde Dehydrogenase, Chain A, domain 2"/>
    <property type="match status" value="1"/>
</dbReference>
<dbReference type="HAMAP" id="MF_00412">
    <property type="entry name" value="ProA"/>
    <property type="match status" value="1"/>
</dbReference>
<dbReference type="InterPro" id="IPR016161">
    <property type="entry name" value="Ald_DH/histidinol_DH"/>
</dbReference>
<dbReference type="InterPro" id="IPR016163">
    <property type="entry name" value="Ald_DH_C"/>
</dbReference>
<dbReference type="InterPro" id="IPR016162">
    <property type="entry name" value="Ald_DH_N"/>
</dbReference>
<dbReference type="InterPro" id="IPR015590">
    <property type="entry name" value="Aldehyde_DH_dom"/>
</dbReference>
<dbReference type="InterPro" id="IPR020593">
    <property type="entry name" value="G-glutamylP_reductase_CS"/>
</dbReference>
<dbReference type="InterPro" id="IPR012134">
    <property type="entry name" value="Glu-5-SA_DH"/>
</dbReference>
<dbReference type="InterPro" id="IPR000965">
    <property type="entry name" value="GPR_dom"/>
</dbReference>
<dbReference type="NCBIfam" id="NF001221">
    <property type="entry name" value="PRK00197.1"/>
    <property type="match status" value="1"/>
</dbReference>
<dbReference type="NCBIfam" id="TIGR00407">
    <property type="entry name" value="proA"/>
    <property type="match status" value="1"/>
</dbReference>
<dbReference type="PANTHER" id="PTHR11063:SF8">
    <property type="entry name" value="DELTA-1-PYRROLINE-5-CARBOXYLATE SYNTHASE"/>
    <property type="match status" value="1"/>
</dbReference>
<dbReference type="PANTHER" id="PTHR11063">
    <property type="entry name" value="GLUTAMATE SEMIALDEHYDE DEHYDROGENASE"/>
    <property type="match status" value="1"/>
</dbReference>
<dbReference type="Pfam" id="PF00171">
    <property type="entry name" value="Aldedh"/>
    <property type="match status" value="1"/>
</dbReference>
<dbReference type="PIRSF" id="PIRSF000151">
    <property type="entry name" value="GPR"/>
    <property type="match status" value="1"/>
</dbReference>
<dbReference type="SUPFAM" id="SSF53720">
    <property type="entry name" value="ALDH-like"/>
    <property type="match status" value="1"/>
</dbReference>
<dbReference type="PROSITE" id="PS01223">
    <property type="entry name" value="PROA"/>
    <property type="match status" value="1"/>
</dbReference>
<comment type="function">
    <text evidence="1">Catalyzes the NADPH-dependent reduction of L-glutamate 5-phosphate into L-glutamate 5-semialdehyde and phosphate. The product spontaneously undergoes cyclization to form 1-pyrroline-5-carboxylate.</text>
</comment>
<comment type="catalytic activity">
    <reaction evidence="1">
        <text>L-glutamate 5-semialdehyde + phosphate + NADP(+) = L-glutamyl 5-phosphate + NADPH + H(+)</text>
        <dbReference type="Rhea" id="RHEA:19541"/>
        <dbReference type="ChEBI" id="CHEBI:15378"/>
        <dbReference type="ChEBI" id="CHEBI:43474"/>
        <dbReference type="ChEBI" id="CHEBI:57783"/>
        <dbReference type="ChEBI" id="CHEBI:58066"/>
        <dbReference type="ChEBI" id="CHEBI:58274"/>
        <dbReference type="ChEBI" id="CHEBI:58349"/>
        <dbReference type="EC" id="1.2.1.41"/>
    </reaction>
</comment>
<comment type="pathway">
    <text evidence="1">Amino-acid biosynthesis; L-proline biosynthesis; L-glutamate 5-semialdehyde from L-glutamate: step 2/2.</text>
</comment>
<comment type="subcellular location">
    <subcellularLocation>
        <location evidence="1">Cytoplasm</location>
    </subcellularLocation>
</comment>
<comment type="similarity">
    <text evidence="1">Belongs to the gamma-glutamyl phosphate reductase family.</text>
</comment>
<protein>
    <recommendedName>
        <fullName evidence="1">Gamma-glutamyl phosphate reductase</fullName>
        <shortName evidence="1">GPR</shortName>
        <ecNumber evidence="1">1.2.1.41</ecNumber>
    </recommendedName>
    <alternativeName>
        <fullName evidence="1">Glutamate-5-semialdehyde dehydrogenase</fullName>
    </alternativeName>
    <alternativeName>
        <fullName evidence="1">Glutamyl-gamma-semialdehyde dehydrogenase</fullName>
        <shortName evidence="1">GSA dehydrogenase</shortName>
    </alternativeName>
</protein>